<comment type="subcellular location">
    <subcellularLocation>
        <location>Secreted</location>
    </subcellularLocation>
</comment>
<comment type="similarity">
    <text evidence="2">Belongs to the alpha/beta interferon family.</text>
</comment>
<sequence>MAFVLSLLMALVLVSYGPGGSLGCDLSPNHVLVGRQNLRLLGQMRRLSPRFCLQDRKDFAFPQEMVEVSQFQEAQAISVLHEMLQQSFNLFHKERSSAAWDTTLLEQLLTGLHQQLDDLDACLGLLTGEEDSALGRTGPTLAMKRYFQGIHVYLQEKGYSDCAWEIVRLEIMRSLSSSTSLQERLRMMDGDLKSP</sequence>
<protein>
    <recommendedName>
        <fullName>Interferon omega-1</fullName>
    </recommendedName>
    <alternativeName>
        <fullName>IFN-omega-c1</fullName>
    </alternativeName>
    <alternativeName>
        <fullName>Interferon alpha-II-1</fullName>
    </alternativeName>
</protein>
<name>IFNW1_BOVIN</name>
<reference key="1">
    <citation type="journal article" date="1985" name="Mol. Cell. Biol.">
        <title>Two distinct families of human and bovine interferon-alpha genes are coordinately expressed and encode functional polypeptides.</title>
        <authorList>
            <person name="Capon D.J."/>
            <person name="Shepard H.M."/>
            <person name="Goeddel D.V."/>
        </authorList>
    </citation>
    <scope>NUCLEOTIDE SEQUENCE [GENOMIC DNA]</scope>
    <source>
        <tissue>Pancreas</tissue>
    </source>
</reference>
<reference key="2">
    <citation type="submission" date="2000-02" db="EMBL/GenBank/DDBJ databases">
        <title>Cloning bovine interferon-tau genes and characterizing their transcriptional expression during early pregnancy.</title>
        <authorList>
            <person name="Chung Y.G."/>
            <person name="Seidel G.E. Jr."/>
        </authorList>
    </citation>
    <scope>NUCLEOTIDE SEQUENCE [GENOMIC DNA]</scope>
</reference>
<dbReference type="EMBL" id="M11002">
    <property type="protein sequence ID" value="AAA30578.1"/>
    <property type="molecule type" value="Genomic_DNA"/>
</dbReference>
<dbReference type="EMBL" id="AF238610">
    <property type="protein sequence ID" value="AAG14167.1"/>
    <property type="molecule type" value="Genomic_DNA"/>
</dbReference>
<dbReference type="PIR" id="B23285">
    <property type="entry name" value="IVBOII"/>
</dbReference>
<dbReference type="RefSeq" id="NP_776776.1">
    <property type="nucleotide sequence ID" value="NM_174351.1"/>
</dbReference>
<dbReference type="SMR" id="P07352"/>
<dbReference type="FunCoup" id="P07352">
    <property type="interactions" value="183"/>
</dbReference>
<dbReference type="STRING" id="9913.ENSBTAP00000071221"/>
<dbReference type="PaxDb" id="9913-ENSBTAP00000055699"/>
<dbReference type="GeneID" id="281847"/>
<dbReference type="KEGG" id="bta:281847"/>
<dbReference type="CTD" id="3467"/>
<dbReference type="eggNOG" id="ENOG502T289">
    <property type="taxonomic scope" value="Eukaryota"/>
</dbReference>
<dbReference type="HOGENOM" id="CLU_109427_0_0_1"/>
<dbReference type="InParanoid" id="P07352"/>
<dbReference type="OrthoDB" id="9833506at2759"/>
<dbReference type="TreeFam" id="TF336177"/>
<dbReference type="Proteomes" id="UP000009136">
    <property type="component" value="Unplaced"/>
</dbReference>
<dbReference type="GO" id="GO:0005615">
    <property type="term" value="C:extracellular space"/>
    <property type="evidence" value="ECO:0000318"/>
    <property type="project" value="GO_Central"/>
</dbReference>
<dbReference type="GO" id="GO:0005125">
    <property type="term" value="F:cytokine activity"/>
    <property type="evidence" value="ECO:0000318"/>
    <property type="project" value="GO_Central"/>
</dbReference>
<dbReference type="GO" id="GO:0005132">
    <property type="term" value="F:type I interferon receptor binding"/>
    <property type="evidence" value="ECO:0000318"/>
    <property type="project" value="GO_Central"/>
</dbReference>
<dbReference type="GO" id="GO:0002250">
    <property type="term" value="P:adaptive immune response"/>
    <property type="evidence" value="ECO:0000318"/>
    <property type="project" value="GO_Central"/>
</dbReference>
<dbReference type="GO" id="GO:0002312">
    <property type="term" value="P:B cell activation involved in immune response"/>
    <property type="evidence" value="ECO:0000318"/>
    <property type="project" value="GO_Central"/>
</dbReference>
<dbReference type="GO" id="GO:0051607">
    <property type="term" value="P:defense response to virus"/>
    <property type="evidence" value="ECO:0007669"/>
    <property type="project" value="UniProtKB-KW"/>
</dbReference>
<dbReference type="GO" id="GO:0006959">
    <property type="term" value="P:humoral immune response"/>
    <property type="evidence" value="ECO:0000318"/>
    <property type="project" value="GO_Central"/>
</dbReference>
<dbReference type="GO" id="GO:0002323">
    <property type="term" value="P:natural killer cell activation involved in immune response"/>
    <property type="evidence" value="ECO:0000318"/>
    <property type="project" value="GO_Central"/>
</dbReference>
<dbReference type="GO" id="GO:0009891">
    <property type="term" value="P:positive regulation of biosynthetic process"/>
    <property type="evidence" value="ECO:0007669"/>
    <property type="project" value="UniProtKB-ARBA"/>
</dbReference>
<dbReference type="GO" id="GO:0043330">
    <property type="term" value="P:response to exogenous dsRNA"/>
    <property type="evidence" value="ECO:0000318"/>
    <property type="project" value="GO_Central"/>
</dbReference>
<dbReference type="GO" id="GO:0002286">
    <property type="term" value="P:T cell activation involved in immune response"/>
    <property type="evidence" value="ECO:0000318"/>
    <property type="project" value="GO_Central"/>
</dbReference>
<dbReference type="GO" id="GO:0060337">
    <property type="term" value="P:type I interferon-mediated signaling pathway"/>
    <property type="evidence" value="ECO:0000318"/>
    <property type="project" value="GO_Central"/>
</dbReference>
<dbReference type="CDD" id="cd00095">
    <property type="entry name" value="IFab"/>
    <property type="match status" value="1"/>
</dbReference>
<dbReference type="FunFam" id="1.20.1250.10:FF:000001">
    <property type="entry name" value="Interferon alpha"/>
    <property type="match status" value="1"/>
</dbReference>
<dbReference type="Gene3D" id="1.20.1250.10">
    <property type="match status" value="1"/>
</dbReference>
<dbReference type="InterPro" id="IPR009079">
    <property type="entry name" value="4_helix_cytokine-like_core"/>
</dbReference>
<dbReference type="InterPro" id="IPR000471">
    <property type="entry name" value="Interferon_alpha/beta/delta"/>
</dbReference>
<dbReference type="PANTHER" id="PTHR11691:SF37">
    <property type="entry name" value="INTERFERON OMEGA-1"/>
    <property type="match status" value="1"/>
</dbReference>
<dbReference type="PANTHER" id="PTHR11691">
    <property type="entry name" value="TYPE I INTERFERON"/>
    <property type="match status" value="1"/>
</dbReference>
<dbReference type="Pfam" id="PF00143">
    <property type="entry name" value="Interferon"/>
    <property type="match status" value="1"/>
</dbReference>
<dbReference type="PRINTS" id="PR00266">
    <property type="entry name" value="INTERFERONAB"/>
</dbReference>
<dbReference type="SMART" id="SM00076">
    <property type="entry name" value="IFabd"/>
    <property type="match status" value="1"/>
</dbReference>
<dbReference type="SUPFAM" id="SSF47266">
    <property type="entry name" value="4-helical cytokines"/>
    <property type="match status" value="1"/>
</dbReference>
<dbReference type="PROSITE" id="PS00252">
    <property type="entry name" value="INTERFERON_A_B_D"/>
    <property type="match status" value="1"/>
</dbReference>
<proteinExistence type="inferred from homology"/>
<gene>
    <name type="primary">IFNW1</name>
    <name type="synonym">IFNW</name>
</gene>
<organism>
    <name type="scientific">Bos taurus</name>
    <name type="common">Bovine</name>
    <dbReference type="NCBI Taxonomy" id="9913"/>
    <lineage>
        <taxon>Eukaryota</taxon>
        <taxon>Metazoa</taxon>
        <taxon>Chordata</taxon>
        <taxon>Craniata</taxon>
        <taxon>Vertebrata</taxon>
        <taxon>Euteleostomi</taxon>
        <taxon>Mammalia</taxon>
        <taxon>Eutheria</taxon>
        <taxon>Laurasiatheria</taxon>
        <taxon>Artiodactyla</taxon>
        <taxon>Ruminantia</taxon>
        <taxon>Pecora</taxon>
        <taxon>Bovidae</taxon>
        <taxon>Bovinae</taxon>
        <taxon>Bos</taxon>
    </lineage>
</organism>
<accession>P07352</accession>
<keyword id="KW-0051">Antiviral defense</keyword>
<keyword id="KW-0202">Cytokine</keyword>
<keyword id="KW-1015">Disulfide bond</keyword>
<keyword id="KW-1185">Reference proteome</keyword>
<keyword id="KW-0964">Secreted</keyword>
<keyword id="KW-0732">Signal</keyword>
<evidence type="ECO:0000250" key="1"/>
<evidence type="ECO:0000305" key="2"/>
<feature type="signal peptide">
    <location>
        <begin position="1"/>
        <end position="23"/>
    </location>
</feature>
<feature type="chain" id="PRO_0000016405" description="Interferon omega-1">
    <location>
        <begin position="24"/>
        <end position="195"/>
    </location>
</feature>
<feature type="disulfide bond" evidence="1">
    <location>
        <begin position="24"/>
        <end position="122"/>
    </location>
</feature>
<feature type="disulfide bond" evidence="1">
    <location>
        <begin position="52"/>
        <end position="162"/>
    </location>
</feature>